<gene>
    <name evidence="1" type="primary">rhaB</name>
    <name type="ordered locus">STM4047</name>
</gene>
<accession>P27030</accession>
<keyword id="KW-0067">ATP-binding</keyword>
<keyword id="KW-1015">Disulfide bond</keyword>
<keyword id="KW-0418">Kinase</keyword>
<keyword id="KW-0547">Nucleotide-binding</keyword>
<keyword id="KW-1185">Reference proteome</keyword>
<keyword id="KW-0684">Rhamnose metabolism</keyword>
<keyword id="KW-0808">Transferase</keyword>
<protein>
    <recommendedName>
        <fullName evidence="1">Rhamnulokinase</fullName>
        <shortName evidence="1">RhaB</shortName>
        <ecNumber evidence="1">2.7.1.5</ecNumber>
    </recommendedName>
    <alternativeName>
        <fullName evidence="1">ATP:L-rhamnulose phosphotransferase</fullName>
    </alternativeName>
    <alternativeName>
        <fullName evidence="1">L-rhamnulose 1-kinase</fullName>
    </alternativeName>
    <alternativeName>
        <fullName evidence="1">Rhamnulose kinase</fullName>
    </alternativeName>
</protein>
<proteinExistence type="inferred from homology"/>
<evidence type="ECO:0000255" key="1">
    <source>
        <dbReference type="HAMAP-Rule" id="MF_01535"/>
    </source>
</evidence>
<dbReference type="EC" id="2.7.1.5" evidence="1"/>
<dbReference type="EMBL" id="X57299">
    <property type="protein sequence ID" value="CAA40557.1"/>
    <property type="molecule type" value="Genomic_DNA"/>
</dbReference>
<dbReference type="EMBL" id="AE006468">
    <property type="protein sequence ID" value="AAL22887.1"/>
    <property type="molecule type" value="Genomic_DNA"/>
</dbReference>
<dbReference type="PIR" id="JQ1289">
    <property type="entry name" value="JQ1289"/>
</dbReference>
<dbReference type="RefSeq" id="NP_462928.1">
    <property type="nucleotide sequence ID" value="NC_003197.2"/>
</dbReference>
<dbReference type="RefSeq" id="WP_000143970.1">
    <property type="nucleotide sequence ID" value="NC_003197.2"/>
</dbReference>
<dbReference type="SMR" id="P27030"/>
<dbReference type="STRING" id="99287.STM4047"/>
<dbReference type="PaxDb" id="99287-STM4047"/>
<dbReference type="GeneID" id="1255574"/>
<dbReference type="KEGG" id="stm:STM4047"/>
<dbReference type="PATRIC" id="fig|99287.12.peg.4264"/>
<dbReference type="HOGENOM" id="CLU_039395_0_0_6"/>
<dbReference type="OMA" id="HYRDART"/>
<dbReference type="PhylomeDB" id="P27030"/>
<dbReference type="BioCyc" id="SENT99287:STM4047-MONOMER"/>
<dbReference type="UniPathway" id="UPA00541">
    <property type="reaction ID" value="UER00602"/>
</dbReference>
<dbReference type="Proteomes" id="UP000001014">
    <property type="component" value="Chromosome"/>
</dbReference>
<dbReference type="GO" id="GO:0005829">
    <property type="term" value="C:cytosol"/>
    <property type="evidence" value="ECO:0000318"/>
    <property type="project" value="GO_Central"/>
</dbReference>
<dbReference type="GO" id="GO:0005524">
    <property type="term" value="F:ATP binding"/>
    <property type="evidence" value="ECO:0007669"/>
    <property type="project" value="UniProtKB-KW"/>
</dbReference>
<dbReference type="GO" id="GO:0004370">
    <property type="term" value="F:glycerol kinase activity"/>
    <property type="evidence" value="ECO:0000318"/>
    <property type="project" value="GO_Central"/>
</dbReference>
<dbReference type="GO" id="GO:0008993">
    <property type="term" value="F:rhamnulokinase activity"/>
    <property type="evidence" value="ECO:0007669"/>
    <property type="project" value="UniProtKB-UniRule"/>
</dbReference>
<dbReference type="GO" id="GO:0019301">
    <property type="term" value="P:rhamnose catabolic process"/>
    <property type="evidence" value="ECO:0000318"/>
    <property type="project" value="GO_Central"/>
</dbReference>
<dbReference type="CDD" id="cd07771">
    <property type="entry name" value="ASKHA_NBD_FGGY_RhaB-like"/>
    <property type="match status" value="1"/>
</dbReference>
<dbReference type="FunFam" id="3.30.420.40:FF:000064">
    <property type="entry name" value="Rhamnulokinase"/>
    <property type="match status" value="1"/>
</dbReference>
<dbReference type="FunFam" id="3.30.420.40:FF:000073">
    <property type="entry name" value="Rhamnulokinase"/>
    <property type="match status" value="1"/>
</dbReference>
<dbReference type="Gene3D" id="3.30.420.40">
    <property type="match status" value="2"/>
</dbReference>
<dbReference type="HAMAP" id="MF_01535">
    <property type="entry name" value="Rhamnulokinase"/>
    <property type="match status" value="1"/>
</dbReference>
<dbReference type="InterPro" id="IPR043129">
    <property type="entry name" value="ATPase_NBD"/>
</dbReference>
<dbReference type="InterPro" id="IPR018485">
    <property type="entry name" value="FGGY_C"/>
</dbReference>
<dbReference type="InterPro" id="IPR018484">
    <property type="entry name" value="FGGY_N"/>
</dbReference>
<dbReference type="InterPro" id="IPR013449">
    <property type="entry name" value="Rhamnulokinase"/>
</dbReference>
<dbReference type="NCBIfam" id="NF007925">
    <property type="entry name" value="PRK10640.1"/>
    <property type="match status" value="1"/>
</dbReference>
<dbReference type="NCBIfam" id="TIGR02627">
    <property type="entry name" value="rhamnulo_kin"/>
    <property type="match status" value="1"/>
</dbReference>
<dbReference type="PANTHER" id="PTHR10196:SF93">
    <property type="entry name" value="L-RHAMNULOKINASE"/>
    <property type="match status" value="1"/>
</dbReference>
<dbReference type="PANTHER" id="PTHR10196">
    <property type="entry name" value="SUGAR KINASE"/>
    <property type="match status" value="1"/>
</dbReference>
<dbReference type="Pfam" id="PF02782">
    <property type="entry name" value="FGGY_C"/>
    <property type="match status" value="1"/>
</dbReference>
<dbReference type="Pfam" id="PF00370">
    <property type="entry name" value="FGGY_N"/>
    <property type="match status" value="1"/>
</dbReference>
<dbReference type="SUPFAM" id="SSF53067">
    <property type="entry name" value="Actin-like ATPase domain"/>
    <property type="match status" value="2"/>
</dbReference>
<reference key="1">
    <citation type="journal article" date="1991" name="Gene">
        <title>Cloning and characterization of the L-rhamnose regulon in Salmonella typhimurium LT2.</title>
        <authorList>
            <person name="Nishitani J."/>
            <person name="Wilcox G."/>
        </authorList>
    </citation>
    <scope>NUCLEOTIDE SEQUENCE [GENOMIC DNA]</scope>
    <source>
        <strain>LT2 / SGSC1412 / ATCC 700720</strain>
    </source>
</reference>
<reference key="2">
    <citation type="journal article" date="2001" name="Nature">
        <title>Complete genome sequence of Salmonella enterica serovar Typhimurium LT2.</title>
        <authorList>
            <person name="McClelland M."/>
            <person name="Sanderson K.E."/>
            <person name="Spieth J."/>
            <person name="Clifton S.W."/>
            <person name="Latreille P."/>
            <person name="Courtney L."/>
            <person name="Porwollik S."/>
            <person name="Ali J."/>
            <person name="Dante M."/>
            <person name="Du F."/>
            <person name="Hou S."/>
            <person name="Layman D."/>
            <person name="Leonard S."/>
            <person name="Nguyen C."/>
            <person name="Scott K."/>
            <person name="Holmes A."/>
            <person name="Grewal N."/>
            <person name="Mulvaney E."/>
            <person name="Ryan E."/>
            <person name="Sun H."/>
            <person name="Florea L."/>
            <person name="Miller W."/>
            <person name="Stoneking T."/>
            <person name="Nhan M."/>
            <person name="Waterston R."/>
            <person name="Wilson R.K."/>
        </authorList>
    </citation>
    <scope>NUCLEOTIDE SEQUENCE [LARGE SCALE GENOMIC DNA]</scope>
    <source>
        <strain>LT2 / SGSC1412 / ATCC 700720</strain>
    </source>
</reference>
<feature type="chain" id="PRO_0000090545" description="Rhamnulokinase">
    <location>
        <begin position="1"/>
        <end position="489"/>
    </location>
</feature>
<feature type="active site" description="Proton acceptor" evidence="1">
    <location>
        <position position="237"/>
    </location>
</feature>
<feature type="binding site" evidence="1">
    <location>
        <begin position="13"/>
        <end position="17"/>
    </location>
    <ligand>
        <name>ATP</name>
        <dbReference type="ChEBI" id="CHEBI:30616"/>
    </ligand>
</feature>
<feature type="binding site" evidence="1">
    <location>
        <position position="83"/>
    </location>
    <ligand>
        <name>substrate</name>
    </ligand>
</feature>
<feature type="binding site" evidence="1">
    <location>
        <begin position="236"/>
        <end position="238"/>
    </location>
    <ligand>
        <name>substrate</name>
    </ligand>
</feature>
<feature type="binding site" evidence="1">
    <location>
        <position position="259"/>
    </location>
    <ligand>
        <name>ATP</name>
        <dbReference type="ChEBI" id="CHEBI:30616"/>
    </ligand>
</feature>
<feature type="binding site" evidence="1">
    <location>
        <position position="296"/>
    </location>
    <ligand>
        <name>substrate</name>
    </ligand>
</feature>
<feature type="binding site" evidence="1">
    <location>
        <position position="304"/>
    </location>
    <ligand>
        <name>ATP</name>
        <dbReference type="ChEBI" id="CHEBI:30616"/>
    </ligand>
</feature>
<feature type="binding site" evidence="1">
    <location>
        <position position="402"/>
    </location>
    <ligand>
        <name>ATP</name>
        <dbReference type="ChEBI" id="CHEBI:30616"/>
    </ligand>
</feature>
<feature type="disulfide bond" evidence="1">
    <location>
        <begin position="68"/>
        <end position="222"/>
    </location>
</feature>
<feature type="disulfide bond" evidence="1">
    <location>
        <begin position="353"/>
        <end position="370"/>
    </location>
</feature>
<feature type="disulfide bond" evidence="1">
    <location>
        <begin position="413"/>
        <end position="417"/>
    </location>
</feature>
<sequence length="489" mass="54578">MTFRHCVAVDLGASSGRVMLARYDSKHRTLTLREIHRFVNCLQKTDGFDTWDIDSLEKDIRLGLKKVCNEGILIDSIGIDTWGVDYVLLDKQGQRVGLPVSYRDNRTTGIMPQALVQIGKSEIYRRSGIQFLPFNTIYQLRALTKQQPELTAQVAHALLMPDYFSYRLTGEMNWEYTNATTTQLVNINTDDWDDTLLAWTGAKKSWFGRPSHPGNVIGDWICPQGNRIPVVAVASHDTASAVIASPLANKHSAYLSSGTWSLMGFESKMPYTTDEALAANITNEGGAEGRYRVLKNIMGLWLLQRVLKERRITDLPALIAQTEALPACRFLINPNDDRFINPDDMRAEIQAACRETDQPVPVSDAELARCIFDSLALLYADILHEQANLRGEKFTQLHIVGGGCQNSLLNQLCADACGIRVMAGPVEASTLGNIGIQLMTLDELNNVDDFRQVVSANYDLTTYIPNPDSEIARHVAQFQPKRQTKELCA</sequence>
<name>RHAB_SALTY</name>
<organism>
    <name type="scientific">Salmonella typhimurium (strain LT2 / SGSC1412 / ATCC 700720)</name>
    <dbReference type="NCBI Taxonomy" id="99287"/>
    <lineage>
        <taxon>Bacteria</taxon>
        <taxon>Pseudomonadati</taxon>
        <taxon>Pseudomonadota</taxon>
        <taxon>Gammaproteobacteria</taxon>
        <taxon>Enterobacterales</taxon>
        <taxon>Enterobacteriaceae</taxon>
        <taxon>Salmonella</taxon>
    </lineage>
</organism>
<comment type="function">
    <text evidence="1">Involved in the catabolism of L-rhamnose (6-deoxy-L-mannose). Catalyzes the transfer of the gamma-phosphate group from ATP to the 1-hydroxyl group of L-rhamnulose to yield L-rhamnulose 1-phosphate.</text>
</comment>
<comment type="catalytic activity">
    <reaction evidence="1">
        <text>L-rhamnulose + ATP = L-rhamnulose 1-phosphate + ADP + H(+)</text>
        <dbReference type="Rhea" id="RHEA:20117"/>
        <dbReference type="ChEBI" id="CHEBI:15378"/>
        <dbReference type="ChEBI" id="CHEBI:17897"/>
        <dbReference type="ChEBI" id="CHEBI:30616"/>
        <dbReference type="ChEBI" id="CHEBI:58313"/>
        <dbReference type="ChEBI" id="CHEBI:456216"/>
        <dbReference type="EC" id="2.7.1.5"/>
    </reaction>
</comment>
<comment type="cofactor">
    <cofactor evidence="1">
        <name>Mg(2+)</name>
        <dbReference type="ChEBI" id="CHEBI:18420"/>
    </cofactor>
</comment>
<comment type="pathway">
    <text evidence="1">Carbohydrate degradation; L-rhamnose degradation; glycerone phosphate from L-rhamnose: step 2/3.</text>
</comment>
<comment type="similarity">
    <text evidence="1">Belongs to the rhamnulokinase family.</text>
</comment>